<reference key="1">
    <citation type="journal article" date="2013" name="Proc. Natl. Acad. Sci. U.S.A.">
        <title>Polynucleobacter necessarius, a model for genome reduction in both free-living and symbiotic bacteria.</title>
        <authorList>
            <person name="Boscaro V."/>
            <person name="Felletti M."/>
            <person name="Vannini C."/>
            <person name="Ackerman M.S."/>
            <person name="Chain P.S."/>
            <person name="Malfatti S."/>
            <person name="Vergez L.M."/>
            <person name="Shin M."/>
            <person name="Doak T.G."/>
            <person name="Lynch M."/>
            <person name="Petroni G."/>
        </authorList>
    </citation>
    <scope>NUCLEOTIDE SEQUENCE [LARGE SCALE GENOMIC DNA]</scope>
    <source>
        <strain>STIR1</strain>
    </source>
</reference>
<gene>
    <name evidence="1" type="primary">trpD</name>
    <name type="ordered locus">Pnec_0160</name>
</gene>
<keyword id="KW-0028">Amino-acid biosynthesis</keyword>
<keyword id="KW-0057">Aromatic amino acid biosynthesis</keyword>
<keyword id="KW-0328">Glycosyltransferase</keyword>
<keyword id="KW-0460">Magnesium</keyword>
<keyword id="KW-0479">Metal-binding</keyword>
<keyword id="KW-0808">Transferase</keyword>
<keyword id="KW-0822">Tryptophan biosynthesis</keyword>
<evidence type="ECO:0000255" key="1">
    <source>
        <dbReference type="HAMAP-Rule" id="MF_00211"/>
    </source>
</evidence>
<protein>
    <recommendedName>
        <fullName evidence="1">Anthranilate phosphoribosyltransferase</fullName>
        <ecNumber evidence="1">2.4.2.18</ecNumber>
    </recommendedName>
</protein>
<feature type="chain" id="PRO_1000099830" description="Anthranilate phosphoribosyltransferase">
    <location>
        <begin position="1"/>
        <end position="341"/>
    </location>
</feature>
<feature type="binding site" evidence="1">
    <location>
        <position position="84"/>
    </location>
    <ligand>
        <name>5-phospho-alpha-D-ribose 1-diphosphate</name>
        <dbReference type="ChEBI" id="CHEBI:58017"/>
    </ligand>
</feature>
<feature type="binding site" evidence="1">
    <location>
        <position position="84"/>
    </location>
    <ligand>
        <name>anthranilate</name>
        <dbReference type="ChEBI" id="CHEBI:16567"/>
        <label>1</label>
    </ligand>
</feature>
<feature type="binding site" evidence="1">
    <location>
        <begin position="87"/>
        <end position="88"/>
    </location>
    <ligand>
        <name>5-phospho-alpha-D-ribose 1-diphosphate</name>
        <dbReference type="ChEBI" id="CHEBI:58017"/>
    </ligand>
</feature>
<feature type="binding site" evidence="1">
    <location>
        <position position="92"/>
    </location>
    <ligand>
        <name>5-phospho-alpha-D-ribose 1-diphosphate</name>
        <dbReference type="ChEBI" id="CHEBI:58017"/>
    </ligand>
</feature>
<feature type="binding site" evidence="1">
    <location>
        <begin position="94"/>
        <end position="97"/>
    </location>
    <ligand>
        <name>5-phospho-alpha-D-ribose 1-diphosphate</name>
        <dbReference type="ChEBI" id="CHEBI:58017"/>
    </ligand>
</feature>
<feature type="binding site" evidence="1">
    <location>
        <position position="96"/>
    </location>
    <ligand>
        <name>Mg(2+)</name>
        <dbReference type="ChEBI" id="CHEBI:18420"/>
        <label>1</label>
    </ligand>
</feature>
<feature type="binding site" evidence="1">
    <location>
        <begin position="112"/>
        <end position="120"/>
    </location>
    <ligand>
        <name>5-phospho-alpha-D-ribose 1-diphosphate</name>
        <dbReference type="ChEBI" id="CHEBI:58017"/>
    </ligand>
</feature>
<feature type="binding site" evidence="1">
    <location>
        <position position="115"/>
    </location>
    <ligand>
        <name>anthranilate</name>
        <dbReference type="ChEBI" id="CHEBI:16567"/>
        <label>1</label>
    </ligand>
</feature>
<feature type="binding site" evidence="1">
    <location>
        <position position="124"/>
    </location>
    <ligand>
        <name>5-phospho-alpha-D-ribose 1-diphosphate</name>
        <dbReference type="ChEBI" id="CHEBI:58017"/>
    </ligand>
</feature>
<feature type="binding site" evidence="1">
    <location>
        <position position="170"/>
    </location>
    <ligand>
        <name>anthranilate</name>
        <dbReference type="ChEBI" id="CHEBI:16567"/>
        <label>2</label>
    </ligand>
</feature>
<feature type="binding site" evidence="1">
    <location>
        <position position="229"/>
    </location>
    <ligand>
        <name>Mg(2+)</name>
        <dbReference type="ChEBI" id="CHEBI:18420"/>
        <label>2</label>
    </ligand>
</feature>
<feature type="binding site" evidence="1">
    <location>
        <position position="230"/>
    </location>
    <ligand>
        <name>Mg(2+)</name>
        <dbReference type="ChEBI" id="CHEBI:18420"/>
        <label>1</label>
    </ligand>
</feature>
<feature type="binding site" evidence="1">
    <location>
        <position position="230"/>
    </location>
    <ligand>
        <name>Mg(2+)</name>
        <dbReference type="ChEBI" id="CHEBI:18420"/>
        <label>2</label>
    </ligand>
</feature>
<proteinExistence type="inferred from homology"/>
<dbReference type="EC" id="2.4.2.18" evidence="1"/>
<dbReference type="EMBL" id="CP001010">
    <property type="protein sequence ID" value="ACB43469.1"/>
    <property type="molecule type" value="Genomic_DNA"/>
</dbReference>
<dbReference type="SMR" id="B1XSZ2"/>
<dbReference type="STRING" id="452638.Pnec_0160"/>
<dbReference type="KEGG" id="pne:Pnec_0160"/>
<dbReference type="eggNOG" id="COG0547">
    <property type="taxonomic scope" value="Bacteria"/>
</dbReference>
<dbReference type="HOGENOM" id="CLU_034315_2_1_4"/>
<dbReference type="OrthoDB" id="9806430at2"/>
<dbReference type="UniPathway" id="UPA00035">
    <property type="reaction ID" value="UER00041"/>
</dbReference>
<dbReference type="GO" id="GO:0005829">
    <property type="term" value="C:cytosol"/>
    <property type="evidence" value="ECO:0007669"/>
    <property type="project" value="TreeGrafter"/>
</dbReference>
<dbReference type="GO" id="GO:0004048">
    <property type="term" value="F:anthranilate phosphoribosyltransferase activity"/>
    <property type="evidence" value="ECO:0007669"/>
    <property type="project" value="UniProtKB-UniRule"/>
</dbReference>
<dbReference type="GO" id="GO:0000287">
    <property type="term" value="F:magnesium ion binding"/>
    <property type="evidence" value="ECO:0007669"/>
    <property type="project" value="UniProtKB-UniRule"/>
</dbReference>
<dbReference type="GO" id="GO:0000162">
    <property type="term" value="P:L-tryptophan biosynthetic process"/>
    <property type="evidence" value="ECO:0007669"/>
    <property type="project" value="UniProtKB-UniRule"/>
</dbReference>
<dbReference type="FunFam" id="1.20.970.10:FF:000006">
    <property type="entry name" value="Anthranilate phosphoribosyltransferase"/>
    <property type="match status" value="1"/>
</dbReference>
<dbReference type="FunFam" id="3.40.1030.10:FF:000002">
    <property type="entry name" value="Anthranilate phosphoribosyltransferase"/>
    <property type="match status" value="1"/>
</dbReference>
<dbReference type="Gene3D" id="3.40.1030.10">
    <property type="entry name" value="Nucleoside phosphorylase/phosphoribosyltransferase catalytic domain"/>
    <property type="match status" value="1"/>
</dbReference>
<dbReference type="Gene3D" id="1.20.970.10">
    <property type="entry name" value="Transferase, Pyrimidine Nucleoside Phosphorylase, Chain C"/>
    <property type="match status" value="1"/>
</dbReference>
<dbReference type="HAMAP" id="MF_00211">
    <property type="entry name" value="TrpD"/>
    <property type="match status" value="1"/>
</dbReference>
<dbReference type="InterPro" id="IPR005940">
    <property type="entry name" value="Anthranilate_Pribosyl_Tfrase"/>
</dbReference>
<dbReference type="InterPro" id="IPR000312">
    <property type="entry name" value="Glycosyl_Trfase_fam3"/>
</dbReference>
<dbReference type="InterPro" id="IPR017459">
    <property type="entry name" value="Glycosyl_Trfase_fam3_N_dom"/>
</dbReference>
<dbReference type="InterPro" id="IPR036320">
    <property type="entry name" value="Glycosyl_Trfase_fam3_N_dom_sf"/>
</dbReference>
<dbReference type="InterPro" id="IPR035902">
    <property type="entry name" value="Nuc_phospho_transferase"/>
</dbReference>
<dbReference type="NCBIfam" id="TIGR01245">
    <property type="entry name" value="trpD"/>
    <property type="match status" value="1"/>
</dbReference>
<dbReference type="PANTHER" id="PTHR43285">
    <property type="entry name" value="ANTHRANILATE PHOSPHORIBOSYLTRANSFERASE"/>
    <property type="match status" value="1"/>
</dbReference>
<dbReference type="PANTHER" id="PTHR43285:SF2">
    <property type="entry name" value="ANTHRANILATE PHOSPHORIBOSYLTRANSFERASE"/>
    <property type="match status" value="1"/>
</dbReference>
<dbReference type="Pfam" id="PF02885">
    <property type="entry name" value="Glycos_trans_3N"/>
    <property type="match status" value="1"/>
</dbReference>
<dbReference type="Pfam" id="PF00591">
    <property type="entry name" value="Glycos_transf_3"/>
    <property type="match status" value="1"/>
</dbReference>
<dbReference type="SUPFAM" id="SSF52418">
    <property type="entry name" value="Nucleoside phosphorylase/phosphoribosyltransferase catalytic domain"/>
    <property type="match status" value="1"/>
</dbReference>
<dbReference type="SUPFAM" id="SSF47648">
    <property type="entry name" value="Nucleoside phosphorylase/phosphoribosyltransferase N-terminal domain"/>
    <property type="match status" value="1"/>
</dbReference>
<organism>
    <name type="scientific">Polynucleobacter necessarius subsp. necessarius (strain STIR1)</name>
    <dbReference type="NCBI Taxonomy" id="452638"/>
    <lineage>
        <taxon>Bacteria</taxon>
        <taxon>Pseudomonadati</taxon>
        <taxon>Pseudomonadota</taxon>
        <taxon>Betaproteobacteria</taxon>
        <taxon>Burkholderiales</taxon>
        <taxon>Burkholderiaceae</taxon>
        <taxon>Polynucleobacter</taxon>
    </lineage>
</organism>
<accession>B1XSZ2</accession>
<name>TRPD_POLNS</name>
<comment type="function">
    <text evidence="1">Catalyzes the transfer of the phosphoribosyl group of 5-phosphorylribose-1-pyrophosphate (PRPP) to anthranilate to yield N-(5'-phosphoribosyl)-anthranilate (PRA).</text>
</comment>
<comment type="catalytic activity">
    <reaction evidence="1">
        <text>N-(5-phospho-beta-D-ribosyl)anthranilate + diphosphate = 5-phospho-alpha-D-ribose 1-diphosphate + anthranilate</text>
        <dbReference type="Rhea" id="RHEA:11768"/>
        <dbReference type="ChEBI" id="CHEBI:16567"/>
        <dbReference type="ChEBI" id="CHEBI:18277"/>
        <dbReference type="ChEBI" id="CHEBI:33019"/>
        <dbReference type="ChEBI" id="CHEBI:58017"/>
        <dbReference type="EC" id="2.4.2.18"/>
    </reaction>
</comment>
<comment type="cofactor">
    <cofactor evidence="1">
        <name>Mg(2+)</name>
        <dbReference type="ChEBI" id="CHEBI:18420"/>
    </cofactor>
    <text evidence="1">Binds 2 magnesium ions per monomer.</text>
</comment>
<comment type="pathway">
    <text evidence="1">Amino-acid biosynthesis; L-tryptophan biosynthesis; L-tryptophan from chorismate: step 2/5.</text>
</comment>
<comment type="subunit">
    <text evidence="1">Homodimer.</text>
</comment>
<comment type="similarity">
    <text evidence="1">Belongs to the anthranilate phosphoribosyltransferase family.</text>
</comment>
<sequence>MSITPQEALQRCIEHRELFHDEMTAMMRLIMSGEMSPELVAGLLIALRTKKETVGEIAAAAQVMREFATSVQVDDRTHLVDVVGTGGDGAHTFNISTAAMFVAAGTGAKIAKHGNRSVSSKSGSADVLEALGVNLALSADQVAKCISTVGTGFMFAPNHHPAMKNVVPIRKQLGVRTIFNILGPLTNPADAKRILMGVFHPDLVGIQARVLQALGMEHALVVYGRGGLDEISLGGPTLVGELKDGVVREYEIHPKDFGLNTAPTNSFKVANAEESKKIVLDVLDGKPGPASDIVCLNAGATLYVAGIAKSIASGIALAKTAITSGAARQKLDTFVVTTQSK</sequence>